<feature type="chain" id="PRO_0000349372" description="Putative uncharacterized protein FLJ43185">
    <location>
        <begin position="1"/>
        <end position="139"/>
    </location>
</feature>
<feature type="region of interest" description="Disordered" evidence="1">
    <location>
        <begin position="1"/>
        <end position="116"/>
    </location>
</feature>
<feature type="compositionally biased region" description="Low complexity" evidence="1">
    <location>
        <begin position="50"/>
        <end position="70"/>
    </location>
</feature>
<feature type="compositionally biased region" description="Low complexity" evidence="1">
    <location>
        <begin position="84"/>
        <end position="110"/>
    </location>
</feature>
<dbReference type="EMBL" id="AK125175">
    <property type="status" value="NOT_ANNOTATED_CDS"/>
    <property type="molecule type" value="mRNA"/>
</dbReference>
<dbReference type="EMBL" id="AL161935">
    <property type="status" value="NOT_ANNOTATED_CDS"/>
    <property type="molecule type" value="Genomic_DNA"/>
</dbReference>
<dbReference type="GlyGen" id="P0C879">
    <property type="glycosylation" value="1 site"/>
</dbReference>
<dbReference type="BioMuta" id="-"/>
<dbReference type="neXtProt" id="NX_P0C879"/>
<dbReference type="InParanoid" id="P0C879"/>
<dbReference type="PAN-GO" id="P0C879">
    <property type="GO annotations" value="0 GO annotations based on evolutionary models"/>
</dbReference>
<dbReference type="Pharos" id="P0C879">
    <property type="development level" value="Tdark"/>
</dbReference>
<dbReference type="Proteomes" id="UP000005640">
    <property type="component" value="Unplaced"/>
</dbReference>
<dbReference type="RNAct" id="P0C879">
    <property type="molecule type" value="protein"/>
</dbReference>
<comment type="caution">
    <text evidence="2">Product of a dubious CDS prediction.</text>
</comment>
<name>YJ018_HUMAN</name>
<organism>
    <name type="scientific">Homo sapiens</name>
    <name type="common">Human</name>
    <dbReference type="NCBI Taxonomy" id="9606"/>
    <lineage>
        <taxon>Eukaryota</taxon>
        <taxon>Metazoa</taxon>
        <taxon>Chordata</taxon>
        <taxon>Craniata</taxon>
        <taxon>Vertebrata</taxon>
        <taxon>Euteleostomi</taxon>
        <taxon>Mammalia</taxon>
        <taxon>Eutheria</taxon>
        <taxon>Euarchontoglires</taxon>
        <taxon>Primates</taxon>
        <taxon>Haplorrhini</taxon>
        <taxon>Catarrhini</taxon>
        <taxon>Hominidae</taxon>
        <taxon>Homo</taxon>
    </lineage>
</organism>
<keyword id="KW-1185">Reference proteome</keyword>
<proteinExistence type="uncertain"/>
<reference key="1">
    <citation type="journal article" date="2004" name="Nat. Genet.">
        <title>Complete sequencing and characterization of 21,243 full-length human cDNAs.</title>
        <authorList>
            <person name="Ota T."/>
            <person name="Suzuki Y."/>
            <person name="Nishikawa T."/>
            <person name="Otsuki T."/>
            <person name="Sugiyama T."/>
            <person name="Irie R."/>
            <person name="Wakamatsu A."/>
            <person name="Hayashi K."/>
            <person name="Sato H."/>
            <person name="Nagai K."/>
            <person name="Kimura K."/>
            <person name="Makita H."/>
            <person name="Sekine M."/>
            <person name="Obayashi M."/>
            <person name="Nishi T."/>
            <person name="Shibahara T."/>
            <person name="Tanaka T."/>
            <person name="Ishii S."/>
            <person name="Yamamoto J."/>
            <person name="Saito K."/>
            <person name="Kawai Y."/>
            <person name="Isono Y."/>
            <person name="Nakamura Y."/>
            <person name="Nagahari K."/>
            <person name="Murakami K."/>
            <person name="Yasuda T."/>
            <person name="Iwayanagi T."/>
            <person name="Wagatsuma M."/>
            <person name="Shiratori A."/>
            <person name="Sudo H."/>
            <person name="Hosoiri T."/>
            <person name="Kaku Y."/>
            <person name="Kodaira H."/>
            <person name="Kondo H."/>
            <person name="Sugawara M."/>
            <person name="Takahashi M."/>
            <person name="Kanda K."/>
            <person name="Yokoi T."/>
            <person name="Furuya T."/>
            <person name="Kikkawa E."/>
            <person name="Omura Y."/>
            <person name="Abe K."/>
            <person name="Kamihara K."/>
            <person name="Katsuta N."/>
            <person name="Sato K."/>
            <person name="Tanikawa M."/>
            <person name="Yamazaki M."/>
            <person name="Ninomiya K."/>
            <person name="Ishibashi T."/>
            <person name="Yamashita H."/>
            <person name="Murakawa K."/>
            <person name="Fujimori K."/>
            <person name="Tanai H."/>
            <person name="Kimata M."/>
            <person name="Watanabe M."/>
            <person name="Hiraoka S."/>
            <person name="Chiba Y."/>
            <person name="Ishida S."/>
            <person name="Ono Y."/>
            <person name="Takiguchi S."/>
            <person name="Watanabe S."/>
            <person name="Yosida M."/>
            <person name="Hotuta T."/>
            <person name="Kusano J."/>
            <person name="Kanehori K."/>
            <person name="Takahashi-Fujii A."/>
            <person name="Hara H."/>
            <person name="Tanase T.-O."/>
            <person name="Nomura Y."/>
            <person name="Togiya S."/>
            <person name="Komai F."/>
            <person name="Hara R."/>
            <person name="Takeuchi K."/>
            <person name="Arita M."/>
            <person name="Imose N."/>
            <person name="Musashino K."/>
            <person name="Yuuki H."/>
            <person name="Oshima A."/>
            <person name="Sasaki N."/>
            <person name="Aotsuka S."/>
            <person name="Yoshikawa Y."/>
            <person name="Matsunawa H."/>
            <person name="Ichihara T."/>
            <person name="Shiohata N."/>
            <person name="Sano S."/>
            <person name="Moriya S."/>
            <person name="Momiyama H."/>
            <person name="Satoh N."/>
            <person name="Takami S."/>
            <person name="Terashima Y."/>
            <person name="Suzuki O."/>
            <person name="Nakagawa S."/>
            <person name="Senoh A."/>
            <person name="Mizoguchi H."/>
            <person name="Goto Y."/>
            <person name="Shimizu F."/>
            <person name="Wakebe H."/>
            <person name="Hishigaki H."/>
            <person name="Watanabe T."/>
            <person name="Sugiyama A."/>
            <person name="Takemoto M."/>
            <person name="Kawakami B."/>
            <person name="Yamazaki M."/>
            <person name="Watanabe K."/>
            <person name="Kumagai A."/>
            <person name="Itakura S."/>
            <person name="Fukuzumi Y."/>
            <person name="Fujimori Y."/>
            <person name="Komiyama M."/>
            <person name="Tashiro H."/>
            <person name="Tanigami A."/>
            <person name="Fujiwara T."/>
            <person name="Ono T."/>
            <person name="Yamada K."/>
            <person name="Fujii Y."/>
            <person name="Ozaki K."/>
            <person name="Hirao M."/>
            <person name="Ohmori Y."/>
            <person name="Kawabata A."/>
            <person name="Hikiji T."/>
            <person name="Kobatake N."/>
            <person name="Inagaki H."/>
            <person name="Ikema Y."/>
            <person name="Okamoto S."/>
            <person name="Okitani R."/>
            <person name="Kawakami T."/>
            <person name="Noguchi S."/>
            <person name="Itoh T."/>
            <person name="Shigeta K."/>
            <person name="Senba T."/>
            <person name="Matsumura K."/>
            <person name="Nakajima Y."/>
            <person name="Mizuno T."/>
            <person name="Morinaga M."/>
            <person name="Sasaki M."/>
            <person name="Togashi T."/>
            <person name="Oyama M."/>
            <person name="Hata H."/>
            <person name="Watanabe M."/>
            <person name="Komatsu T."/>
            <person name="Mizushima-Sugano J."/>
            <person name="Satoh T."/>
            <person name="Shirai Y."/>
            <person name="Takahashi Y."/>
            <person name="Nakagawa K."/>
            <person name="Okumura K."/>
            <person name="Nagase T."/>
            <person name="Nomura N."/>
            <person name="Kikuchi H."/>
            <person name="Masuho Y."/>
            <person name="Yamashita R."/>
            <person name="Nakai K."/>
            <person name="Yada T."/>
            <person name="Nakamura Y."/>
            <person name="Ohara O."/>
            <person name="Isogai T."/>
            <person name="Sugano S."/>
        </authorList>
    </citation>
    <scope>NUCLEOTIDE SEQUENCE [LARGE SCALE MRNA]</scope>
    <source>
        <tissue>Brain</tissue>
    </source>
</reference>
<reference key="2">
    <citation type="journal article" date="2004" name="Nature">
        <title>The DNA sequence and comparative analysis of human chromosome 10.</title>
        <authorList>
            <person name="Deloukas P."/>
            <person name="Earthrowl M.E."/>
            <person name="Grafham D.V."/>
            <person name="Rubenfield M."/>
            <person name="French L."/>
            <person name="Steward C.A."/>
            <person name="Sims S.K."/>
            <person name="Jones M.C."/>
            <person name="Searle S."/>
            <person name="Scott C."/>
            <person name="Howe K."/>
            <person name="Hunt S.E."/>
            <person name="Andrews T.D."/>
            <person name="Gilbert J.G.R."/>
            <person name="Swarbreck D."/>
            <person name="Ashurst J.L."/>
            <person name="Taylor A."/>
            <person name="Battles J."/>
            <person name="Bird C.P."/>
            <person name="Ainscough R."/>
            <person name="Almeida J.P."/>
            <person name="Ashwell R.I.S."/>
            <person name="Ambrose K.D."/>
            <person name="Babbage A.K."/>
            <person name="Bagguley C.L."/>
            <person name="Bailey J."/>
            <person name="Banerjee R."/>
            <person name="Bates K."/>
            <person name="Beasley H."/>
            <person name="Bray-Allen S."/>
            <person name="Brown A.J."/>
            <person name="Brown J.Y."/>
            <person name="Burford D.C."/>
            <person name="Burrill W."/>
            <person name="Burton J."/>
            <person name="Cahill P."/>
            <person name="Camire D."/>
            <person name="Carter N.P."/>
            <person name="Chapman J.C."/>
            <person name="Clark S.Y."/>
            <person name="Clarke G."/>
            <person name="Clee C.M."/>
            <person name="Clegg S."/>
            <person name="Corby N."/>
            <person name="Coulson A."/>
            <person name="Dhami P."/>
            <person name="Dutta I."/>
            <person name="Dunn M."/>
            <person name="Faulkner L."/>
            <person name="Frankish A."/>
            <person name="Frankland J.A."/>
            <person name="Garner P."/>
            <person name="Garnett J."/>
            <person name="Gribble S."/>
            <person name="Griffiths C."/>
            <person name="Grocock R."/>
            <person name="Gustafson E."/>
            <person name="Hammond S."/>
            <person name="Harley J.L."/>
            <person name="Hart E."/>
            <person name="Heath P.D."/>
            <person name="Ho T.P."/>
            <person name="Hopkins B."/>
            <person name="Horne J."/>
            <person name="Howden P.J."/>
            <person name="Huckle E."/>
            <person name="Hynds C."/>
            <person name="Johnson C."/>
            <person name="Johnson D."/>
            <person name="Kana A."/>
            <person name="Kay M."/>
            <person name="Kimberley A.M."/>
            <person name="Kershaw J.K."/>
            <person name="Kokkinaki M."/>
            <person name="Laird G.K."/>
            <person name="Lawlor S."/>
            <person name="Lee H.M."/>
            <person name="Leongamornlert D.A."/>
            <person name="Laird G."/>
            <person name="Lloyd C."/>
            <person name="Lloyd D.M."/>
            <person name="Loveland J."/>
            <person name="Lovell J."/>
            <person name="McLaren S."/>
            <person name="McLay K.E."/>
            <person name="McMurray A."/>
            <person name="Mashreghi-Mohammadi M."/>
            <person name="Matthews L."/>
            <person name="Milne S."/>
            <person name="Nickerson T."/>
            <person name="Nguyen M."/>
            <person name="Overton-Larty E."/>
            <person name="Palmer S.A."/>
            <person name="Pearce A.V."/>
            <person name="Peck A.I."/>
            <person name="Pelan S."/>
            <person name="Phillimore B."/>
            <person name="Porter K."/>
            <person name="Rice C.M."/>
            <person name="Rogosin A."/>
            <person name="Ross M.T."/>
            <person name="Sarafidou T."/>
            <person name="Sehra H.K."/>
            <person name="Shownkeen R."/>
            <person name="Skuce C.D."/>
            <person name="Smith M."/>
            <person name="Standring L."/>
            <person name="Sycamore N."/>
            <person name="Tester J."/>
            <person name="Thorpe A."/>
            <person name="Torcasso W."/>
            <person name="Tracey A."/>
            <person name="Tromans A."/>
            <person name="Tsolas J."/>
            <person name="Wall M."/>
            <person name="Walsh J."/>
            <person name="Wang H."/>
            <person name="Weinstock K."/>
            <person name="West A.P."/>
            <person name="Willey D.L."/>
            <person name="Whitehead S.L."/>
            <person name="Wilming L."/>
            <person name="Wray P.W."/>
            <person name="Young L."/>
            <person name="Chen Y."/>
            <person name="Lovering R.C."/>
            <person name="Moschonas N.K."/>
            <person name="Siebert R."/>
            <person name="Fechtel K."/>
            <person name="Bentley D."/>
            <person name="Durbin R.M."/>
            <person name="Hubbard T."/>
            <person name="Doucette-Stamm L."/>
            <person name="Beck S."/>
            <person name="Smith D.R."/>
            <person name="Rogers J."/>
        </authorList>
    </citation>
    <scope>NUCLEOTIDE SEQUENCE [LARGE SCALE GENOMIC DNA]</scope>
</reference>
<protein>
    <recommendedName>
        <fullName>Putative uncharacterized protein FLJ43185</fullName>
    </recommendedName>
</protein>
<evidence type="ECO:0000256" key="1">
    <source>
        <dbReference type="SAM" id="MobiDB-lite"/>
    </source>
</evidence>
<evidence type="ECO:0000305" key="2"/>
<accession>P0C879</accession>
<sequence length="139" mass="14498">MYNPWQVGASLAPARAGPRPFPTPRARPPDCSGGHAPSGFPALGLRTAQRPRPFSSSPRSASGRLRGPRPVARGPAHSSSPTGLPAYLPPAAALDSQTSAPTVSPVTRPRVVARGKTPRVSLAGLETLSSLLHQQQLFD</sequence>